<sequence>SAIWFWMTPQSPK</sequence>
<reference evidence="3" key="1">
    <citation type="submission" date="2008-07" db="UniProtKB">
        <authorList>
            <person name="Gomez Ros L.V."/>
            <person name="Almagro L."/>
            <person name="Ros Barcelo A."/>
            <person name="Pedreno M.A."/>
        </authorList>
    </citation>
    <scope>PROTEIN SEQUENCE</scope>
</reference>
<proteinExistence type="evidence at protein level"/>
<accession>P86079</accession>
<evidence type="ECO:0000250" key="1">
    <source>
        <dbReference type="UniProtKB" id="P24091"/>
    </source>
</evidence>
<evidence type="ECO:0000255" key="2"/>
<evidence type="ECO:0000305" key="3"/>
<name>CHI2_CAPAA</name>
<comment type="function">
    <text evidence="3">Defense against chitin-containing fungal pathogens.</text>
</comment>
<comment type="catalytic activity">
    <reaction evidence="1">
        <text>Random endo-hydrolysis of N-acetyl-beta-D-glucosaminide (1-&gt;4)-beta-linkages in chitin and chitodextrins.</text>
        <dbReference type="EC" id="3.2.1.14"/>
    </reaction>
</comment>
<comment type="similarity">
    <text evidence="2">Belongs to the glycosyl hydrolase 19 family. Chitinase class I subfamily.</text>
</comment>
<organism>
    <name type="scientific">Capsicum annuum var. annuum</name>
    <name type="common">Red pepper</name>
    <dbReference type="NCBI Taxonomy" id="40321"/>
    <lineage>
        <taxon>Eukaryota</taxon>
        <taxon>Viridiplantae</taxon>
        <taxon>Streptophyta</taxon>
        <taxon>Embryophyta</taxon>
        <taxon>Tracheophyta</taxon>
        <taxon>Spermatophyta</taxon>
        <taxon>Magnoliopsida</taxon>
        <taxon>eudicotyledons</taxon>
        <taxon>Gunneridae</taxon>
        <taxon>Pentapetalae</taxon>
        <taxon>asterids</taxon>
        <taxon>lamiids</taxon>
        <taxon>Solanales</taxon>
        <taxon>Solanaceae</taxon>
        <taxon>Solanoideae</taxon>
        <taxon>Capsiceae</taxon>
        <taxon>Capsicum</taxon>
    </lineage>
</organism>
<keyword id="KW-0119">Carbohydrate metabolism</keyword>
<keyword id="KW-0146">Chitin degradation</keyword>
<keyword id="KW-0903">Direct protein sequencing</keyword>
<keyword id="KW-0326">Glycosidase</keyword>
<keyword id="KW-0378">Hydrolase</keyword>
<keyword id="KW-0379">Hydroxylation</keyword>
<keyword id="KW-0611">Plant defense</keyword>
<keyword id="KW-0624">Polysaccharide degradation</keyword>
<feature type="chain" id="PRO_0000362989" description="Endochitinase 2">
    <location>
        <begin position="1" status="less than"/>
        <end position="13" status="greater than"/>
    </location>
</feature>
<feature type="unsure residue" description="I or L">
    <location>
        <position position="3"/>
    </location>
</feature>
<feature type="unsure residue" description="F or M">
    <location>
        <position position="5"/>
    </location>
</feature>
<feature type="unsure residue" description="M or F">
    <location>
        <position position="7"/>
    </location>
</feature>
<feature type="unsure residue" description="Q or K">
    <location>
        <position position="10"/>
    </location>
</feature>
<feature type="unsure residue" description="K or Q">
    <location>
        <position position="13"/>
    </location>
</feature>
<feature type="non-terminal residue">
    <location>
        <position position="1"/>
    </location>
</feature>
<feature type="non-terminal residue">
    <location>
        <position position="13"/>
    </location>
</feature>
<dbReference type="EC" id="3.2.1.14"/>
<dbReference type="GO" id="GO:0008843">
    <property type="term" value="F:endochitinase activity"/>
    <property type="evidence" value="ECO:0007669"/>
    <property type="project" value="UniProtKB-EC"/>
</dbReference>
<dbReference type="GO" id="GO:0006032">
    <property type="term" value="P:chitin catabolic process"/>
    <property type="evidence" value="ECO:0007669"/>
    <property type="project" value="UniProtKB-KW"/>
</dbReference>
<dbReference type="GO" id="GO:0006952">
    <property type="term" value="P:defense response"/>
    <property type="evidence" value="ECO:0007669"/>
    <property type="project" value="UniProtKB-KW"/>
</dbReference>
<dbReference type="GO" id="GO:0000272">
    <property type="term" value="P:polysaccharide catabolic process"/>
    <property type="evidence" value="ECO:0007669"/>
    <property type="project" value="UniProtKB-KW"/>
</dbReference>
<protein>
    <recommendedName>
        <fullName evidence="1">Endochitinase 2</fullName>
        <ecNumber>3.2.1.14</ecNumber>
    </recommendedName>
</protein>